<dbReference type="EMBL" id="AC025416">
    <property type="protein sequence ID" value="AAF79651.1"/>
    <property type="molecule type" value="Genomic_DNA"/>
</dbReference>
<dbReference type="EMBL" id="AC025417">
    <property type="protein sequence ID" value="AAF88101.1"/>
    <property type="molecule type" value="Genomic_DNA"/>
</dbReference>
<dbReference type="EMBL" id="CP002684">
    <property type="protein sequence ID" value="AEE28890.1"/>
    <property type="molecule type" value="Genomic_DNA"/>
</dbReference>
<dbReference type="EMBL" id="AK117247">
    <property type="protein sequence ID" value="BAC41922.1"/>
    <property type="molecule type" value="mRNA"/>
</dbReference>
<dbReference type="RefSeq" id="NP_172712.1">
    <property type="nucleotide sequence ID" value="NM_101122.4"/>
</dbReference>
<dbReference type="SMR" id="Q9LDH3"/>
<dbReference type="BioGRID" id="23047">
    <property type="interactions" value="16"/>
</dbReference>
<dbReference type="FunCoup" id="Q9LDH3">
    <property type="interactions" value="108"/>
</dbReference>
<dbReference type="IntAct" id="Q9LDH3">
    <property type="interactions" value="16"/>
</dbReference>
<dbReference type="iPTMnet" id="Q9LDH3"/>
<dbReference type="PaxDb" id="3702-AT1G12500.1"/>
<dbReference type="ProteomicsDB" id="248835"/>
<dbReference type="EnsemblPlants" id="AT1G12500.1">
    <property type="protein sequence ID" value="AT1G12500.1"/>
    <property type="gene ID" value="AT1G12500"/>
</dbReference>
<dbReference type="GeneID" id="837807"/>
<dbReference type="Gramene" id="AT1G12500.1">
    <property type="protein sequence ID" value="AT1G12500.1"/>
    <property type="gene ID" value="AT1G12500"/>
</dbReference>
<dbReference type="KEGG" id="ath:AT1G12500"/>
<dbReference type="Araport" id="AT1G12500"/>
<dbReference type="TAIR" id="AT1G12500"/>
<dbReference type="eggNOG" id="KOG1441">
    <property type="taxonomic scope" value="Eukaryota"/>
</dbReference>
<dbReference type="HOGENOM" id="CLU_022332_2_1_1"/>
<dbReference type="InParanoid" id="Q9LDH3"/>
<dbReference type="OMA" id="YFPCGMY"/>
<dbReference type="OrthoDB" id="10261634at2759"/>
<dbReference type="PhylomeDB" id="Q9LDH3"/>
<dbReference type="PRO" id="PR:Q9LDH3"/>
<dbReference type="Proteomes" id="UP000006548">
    <property type="component" value="Chromosome 1"/>
</dbReference>
<dbReference type="ExpressionAtlas" id="Q9LDH3">
    <property type="expression patterns" value="baseline and differential"/>
</dbReference>
<dbReference type="GO" id="GO:0016020">
    <property type="term" value="C:membrane"/>
    <property type="evidence" value="ECO:0007669"/>
    <property type="project" value="UniProtKB-SubCell"/>
</dbReference>
<dbReference type="InterPro" id="IPR004853">
    <property type="entry name" value="Sugar_P_trans_dom"/>
</dbReference>
<dbReference type="InterPro" id="IPR050186">
    <property type="entry name" value="TPT_transporter"/>
</dbReference>
<dbReference type="PANTHER" id="PTHR11132">
    <property type="entry name" value="SOLUTE CARRIER FAMILY 35"/>
    <property type="match status" value="1"/>
</dbReference>
<dbReference type="Pfam" id="PF03151">
    <property type="entry name" value="TPT"/>
    <property type="match status" value="1"/>
</dbReference>
<reference key="1">
    <citation type="journal article" date="2000" name="Nature">
        <title>Sequence and analysis of chromosome 1 of the plant Arabidopsis thaliana.</title>
        <authorList>
            <person name="Theologis A."/>
            <person name="Ecker J.R."/>
            <person name="Palm C.J."/>
            <person name="Federspiel N.A."/>
            <person name="Kaul S."/>
            <person name="White O."/>
            <person name="Alonso J."/>
            <person name="Altafi H."/>
            <person name="Araujo R."/>
            <person name="Bowman C.L."/>
            <person name="Brooks S.Y."/>
            <person name="Buehler E."/>
            <person name="Chan A."/>
            <person name="Chao Q."/>
            <person name="Chen H."/>
            <person name="Cheuk R.F."/>
            <person name="Chin C.W."/>
            <person name="Chung M.K."/>
            <person name="Conn L."/>
            <person name="Conway A.B."/>
            <person name="Conway A.R."/>
            <person name="Creasy T.H."/>
            <person name="Dewar K."/>
            <person name="Dunn P."/>
            <person name="Etgu P."/>
            <person name="Feldblyum T.V."/>
            <person name="Feng J.-D."/>
            <person name="Fong B."/>
            <person name="Fujii C.Y."/>
            <person name="Gill J.E."/>
            <person name="Goldsmith A.D."/>
            <person name="Haas B."/>
            <person name="Hansen N.F."/>
            <person name="Hughes B."/>
            <person name="Huizar L."/>
            <person name="Hunter J.L."/>
            <person name="Jenkins J."/>
            <person name="Johnson-Hopson C."/>
            <person name="Khan S."/>
            <person name="Khaykin E."/>
            <person name="Kim C.J."/>
            <person name="Koo H.L."/>
            <person name="Kremenetskaia I."/>
            <person name="Kurtz D.B."/>
            <person name="Kwan A."/>
            <person name="Lam B."/>
            <person name="Langin-Hooper S."/>
            <person name="Lee A."/>
            <person name="Lee J.M."/>
            <person name="Lenz C.A."/>
            <person name="Li J.H."/>
            <person name="Li Y.-P."/>
            <person name="Lin X."/>
            <person name="Liu S.X."/>
            <person name="Liu Z.A."/>
            <person name="Luros J.S."/>
            <person name="Maiti R."/>
            <person name="Marziali A."/>
            <person name="Militscher J."/>
            <person name="Miranda M."/>
            <person name="Nguyen M."/>
            <person name="Nierman W.C."/>
            <person name="Osborne B.I."/>
            <person name="Pai G."/>
            <person name="Peterson J."/>
            <person name="Pham P.K."/>
            <person name="Rizzo M."/>
            <person name="Rooney T."/>
            <person name="Rowley D."/>
            <person name="Sakano H."/>
            <person name="Salzberg S.L."/>
            <person name="Schwartz J.R."/>
            <person name="Shinn P."/>
            <person name="Southwick A.M."/>
            <person name="Sun H."/>
            <person name="Tallon L.J."/>
            <person name="Tambunga G."/>
            <person name="Toriumi M.J."/>
            <person name="Town C.D."/>
            <person name="Utterback T."/>
            <person name="Van Aken S."/>
            <person name="Vaysberg M."/>
            <person name="Vysotskaia V.S."/>
            <person name="Walker M."/>
            <person name="Wu D."/>
            <person name="Yu G."/>
            <person name="Fraser C.M."/>
            <person name="Venter J.C."/>
            <person name="Davis R.W."/>
        </authorList>
    </citation>
    <scope>NUCLEOTIDE SEQUENCE [LARGE SCALE GENOMIC DNA]</scope>
    <source>
        <strain>cv. Columbia</strain>
    </source>
</reference>
<reference key="2">
    <citation type="journal article" date="2017" name="Plant J.">
        <title>Araport11: a complete reannotation of the Arabidopsis thaliana reference genome.</title>
        <authorList>
            <person name="Cheng C.Y."/>
            <person name="Krishnakumar V."/>
            <person name="Chan A.P."/>
            <person name="Thibaud-Nissen F."/>
            <person name="Schobel S."/>
            <person name="Town C.D."/>
        </authorList>
    </citation>
    <scope>GENOME REANNOTATION</scope>
    <source>
        <strain>cv. Columbia</strain>
    </source>
</reference>
<reference key="3">
    <citation type="journal article" date="2002" name="Science">
        <title>Functional annotation of a full-length Arabidopsis cDNA collection.</title>
        <authorList>
            <person name="Seki M."/>
            <person name="Narusaka M."/>
            <person name="Kamiya A."/>
            <person name="Ishida J."/>
            <person name="Satou M."/>
            <person name="Sakurai T."/>
            <person name="Nakajima M."/>
            <person name="Enju A."/>
            <person name="Akiyama K."/>
            <person name="Oono Y."/>
            <person name="Muramatsu M."/>
            <person name="Hayashizaki Y."/>
            <person name="Kawai J."/>
            <person name="Carninci P."/>
            <person name="Itoh M."/>
            <person name="Ishii Y."/>
            <person name="Arakawa T."/>
            <person name="Shibata K."/>
            <person name="Shinagawa A."/>
            <person name="Shinozaki K."/>
        </authorList>
    </citation>
    <scope>NUCLEOTIDE SEQUENCE [LARGE SCALE MRNA]</scope>
    <source>
        <strain>cv. Columbia</strain>
    </source>
</reference>
<reference key="4">
    <citation type="journal article" date="2012" name="Mol. Cell. Proteomics">
        <title>Comparative large-scale characterisation of plant vs. mammal proteins reveals similar and idiosyncratic N-alpha acetylation features.</title>
        <authorList>
            <person name="Bienvenut W.V."/>
            <person name="Sumpton D."/>
            <person name="Martinez A."/>
            <person name="Lilla S."/>
            <person name="Espagne C."/>
            <person name="Meinnel T."/>
            <person name="Giglione C."/>
        </authorList>
    </citation>
    <scope>ACETYLATION [LARGE SCALE ANALYSIS] AT VAL-2</scope>
    <scope>CLEAVAGE OF INITIATOR METHIONINE [LARGE SCALE ANALYSIS]</scope>
    <scope>IDENTIFICATION BY MASS SPECTROMETRY [LARGE SCALE ANALYSIS]</scope>
</reference>
<reference key="5">
    <citation type="journal article" date="2014" name="Proc. Natl. Acad. Sci. U.S.A.">
        <title>The Golgi localized bifunctional UDP-rhamnose/UDP-galactose transporter family of Arabidopsis.</title>
        <authorList>
            <person name="Rautengarten C."/>
            <person name="Ebert B."/>
            <person name="Moreno I."/>
            <person name="Temple H."/>
            <person name="Herter T."/>
            <person name="Link B."/>
            <person name="Donas-Cofre D."/>
            <person name="Moreno A."/>
            <person name="Saez-Aguayo S."/>
            <person name="Blanco F."/>
            <person name="Mortimer J.C."/>
            <person name="Schultink A."/>
            <person name="Reiter W.D."/>
            <person name="Dupree P."/>
            <person name="Pauly M."/>
            <person name="Heazlewood J.L."/>
            <person name="Scheller H.V."/>
            <person name="Orellana A."/>
        </authorList>
    </citation>
    <scope>GENE FAMILY</scope>
</reference>
<keyword id="KW-0007">Acetylation</keyword>
<keyword id="KW-0472">Membrane</keyword>
<keyword id="KW-1185">Reference proteome</keyword>
<keyword id="KW-0762">Sugar transport</keyword>
<keyword id="KW-0812">Transmembrane</keyword>
<keyword id="KW-1133">Transmembrane helix</keyword>
<keyword id="KW-0813">Transport</keyword>
<accession>Q9LDH3</accession>
<gene>
    <name type="ordered locus">At1g12500</name>
    <name type="ORF">F5O11.25</name>
</gene>
<evidence type="ECO:0000255" key="1"/>
<evidence type="ECO:0000305" key="2"/>
<evidence type="ECO:0007744" key="3">
    <source>
    </source>
</evidence>
<comment type="subcellular location">
    <subcellularLocation>
        <location evidence="2">Membrane</location>
        <topology evidence="2">Multi-pass membrane protein</topology>
    </subcellularLocation>
</comment>
<comment type="similarity">
    <text evidence="2">Belongs to the TPT transporter family. TPT (TC 2.A.7.9) subfamily.</text>
</comment>
<protein>
    <recommendedName>
        <fullName>Probable sugar phosphate/phosphate translocator At1g12500</fullName>
    </recommendedName>
</protein>
<name>PT112_ARATH</name>
<feature type="initiator methionine" description="Removed" evidence="3">
    <location>
        <position position="1"/>
    </location>
</feature>
<feature type="chain" id="PRO_0000406106" description="Probable sugar phosphate/phosphate translocator At1g12500">
    <location>
        <begin position="2"/>
        <end position="361"/>
    </location>
</feature>
<feature type="transmembrane region" description="Helical" evidence="1">
    <location>
        <begin position="56"/>
        <end position="76"/>
    </location>
</feature>
<feature type="transmembrane region" description="Helical" evidence="1">
    <location>
        <begin position="90"/>
        <end position="110"/>
    </location>
</feature>
<feature type="transmembrane region" description="Helical" evidence="1">
    <location>
        <begin position="125"/>
        <end position="145"/>
    </location>
</feature>
<feature type="transmembrane region" description="Helical" evidence="1">
    <location>
        <begin position="153"/>
        <end position="173"/>
    </location>
</feature>
<feature type="transmembrane region" description="Helical" evidence="1">
    <location>
        <begin position="192"/>
        <end position="212"/>
    </location>
</feature>
<feature type="transmembrane region" description="Helical" evidence="1">
    <location>
        <begin position="240"/>
        <end position="260"/>
    </location>
</feature>
<feature type="transmembrane region" description="Helical" evidence="1">
    <location>
        <begin position="276"/>
        <end position="296"/>
    </location>
</feature>
<feature type="transmembrane region" description="Helical" evidence="1">
    <location>
        <begin position="306"/>
        <end position="326"/>
    </location>
</feature>
<feature type="transmembrane region" description="Helical" evidence="1">
    <location>
        <begin position="329"/>
        <end position="349"/>
    </location>
</feature>
<feature type="domain" description="EamA">
    <location>
        <begin position="89"/>
        <end position="196"/>
    </location>
</feature>
<feature type="modified residue" description="N-acetylvaline" evidence="3">
    <location>
        <position position="2"/>
    </location>
</feature>
<sequence>MVEAQSWTTRRMSNPRFDAAATAAPTIVDIPGTPPHSSASSPLKPFFLSSPTVSPTILTAAIIAAWFGSNIGVLLLNKYLLFYYGFRYPIFLTMTHMLSCAAYSSAVINIAGIVPRQHILSRRQFLKILSLSAIFCLSVVCGNTSLRYIPVSFNQAIGATTPFFTAVFSFLITCKTESTEVYLALLPVVSGIVLASNSEPSFHLFGFLICVASTAGRALKSVVQGIILTSESEKLHSMNLLLYMAPMAACILLPFTLYIEGNVLRVLIEKARTDPLIIFLLAGNATVAYLVNLTNFLVTKHTSALTLQVLGNGKAAVAAGVSVLIFRNPVTVMGIAGFGVTIMGVVLYSEARKRSKLLNQK</sequence>
<proteinExistence type="evidence at protein level"/>
<organism>
    <name type="scientific">Arabidopsis thaliana</name>
    <name type="common">Mouse-ear cress</name>
    <dbReference type="NCBI Taxonomy" id="3702"/>
    <lineage>
        <taxon>Eukaryota</taxon>
        <taxon>Viridiplantae</taxon>
        <taxon>Streptophyta</taxon>
        <taxon>Embryophyta</taxon>
        <taxon>Tracheophyta</taxon>
        <taxon>Spermatophyta</taxon>
        <taxon>Magnoliopsida</taxon>
        <taxon>eudicotyledons</taxon>
        <taxon>Gunneridae</taxon>
        <taxon>Pentapetalae</taxon>
        <taxon>rosids</taxon>
        <taxon>malvids</taxon>
        <taxon>Brassicales</taxon>
        <taxon>Brassicaceae</taxon>
        <taxon>Camelineae</taxon>
        <taxon>Arabidopsis</taxon>
    </lineage>
</organism>